<feature type="chain" id="PRO_0000317604" description="Mitochondrial adenyl nucleotide antiporter SLC25A25">
    <location>
        <begin position="1"/>
        <end position="469"/>
    </location>
</feature>
<feature type="topological domain" description="Mitochondrial intermembrane" evidence="1">
    <location>
        <begin position="1"/>
        <end position="189"/>
    </location>
</feature>
<feature type="transmembrane region" description="Helical; Name=1" evidence="3">
    <location>
        <begin position="190"/>
        <end position="207"/>
    </location>
</feature>
<feature type="topological domain" description="Mitochondrial matrix" evidence="1">
    <location>
        <begin position="208"/>
        <end position="244"/>
    </location>
</feature>
<feature type="transmembrane region" description="Helical; Name=2" evidence="3">
    <location>
        <begin position="245"/>
        <end position="264"/>
    </location>
</feature>
<feature type="topological domain" description="Mitochondrial intermembrane" evidence="1">
    <location>
        <begin position="265"/>
        <end position="287"/>
    </location>
</feature>
<feature type="transmembrane region" description="Helical; Name=3" evidence="3">
    <location>
        <begin position="288"/>
        <end position="301"/>
    </location>
</feature>
<feature type="topological domain" description="Mitochondrial matrix" evidence="1">
    <location>
        <begin position="302"/>
        <end position="337"/>
    </location>
</feature>
<feature type="transmembrane region" description="Helical; Name=4" evidence="3">
    <location>
        <begin position="338"/>
        <end position="357"/>
    </location>
</feature>
<feature type="topological domain" description="Mitochondrial intermembrane" evidence="1">
    <location>
        <begin position="358"/>
        <end position="380"/>
    </location>
</feature>
<feature type="transmembrane region" description="Helical; Name=5" evidence="3">
    <location>
        <begin position="381"/>
        <end position="398"/>
    </location>
</feature>
<feature type="topological domain" description="Mitochondrial matrix" evidence="1">
    <location>
        <begin position="399"/>
        <end position="437"/>
    </location>
</feature>
<feature type="transmembrane region" description="Helical; Name=6" evidence="3">
    <location>
        <begin position="438"/>
        <end position="457"/>
    </location>
</feature>
<feature type="topological domain" description="Mitochondrial intermembrane" evidence="1">
    <location>
        <begin position="458"/>
        <end position="469"/>
    </location>
</feature>
<feature type="domain" description="EF-hand 1" evidence="5">
    <location>
        <begin position="47"/>
        <end position="80"/>
    </location>
</feature>
<feature type="domain" description="EF-hand 2" evidence="5">
    <location>
        <begin position="78"/>
        <end position="113"/>
    </location>
</feature>
<feature type="domain" description="EF-hand 3" evidence="5">
    <location>
        <begin position="114"/>
        <end position="149"/>
    </location>
</feature>
<feature type="repeat" description="Solcar 1" evidence="4">
    <location>
        <begin position="184"/>
        <end position="270"/>
    </location>
</feature>
<feature type="repeat" description="Solcar 2" evidence="4">
    <location>
        <begin position="278"/>
        <end position="363"/>
    </location>
</feature>
<feature type="repeat" description="Solcar 3" evidence="4">
    <location>
        <begin position="375"/>
        <end position="463"/>
    </location>
</feature>
<feature type="region of interest" description="Regulatory N-terminal domain" evidence="2">
    <location>
        <begin position="1"/>
        <end position="165"/>
    </location>
</feature>
<feature type="region of interest" description="Linker region" evidence="2">
    <location>
        <begin position="151"/>
        <end position="160"/>
    </location>
</feature>
<feature type="region of interest" description="C-terminal transmembrane transporter domain" evidence="2">
    <location>
        <begin position="166"/>
        <end position="469"/>
    </location>
</feature>
<feature type="binding site" evidence="9">
    <location>
        <position position="60"/>
    </location>
    <ligand>
        <name>Ca(2+)</name>
        <dbReference type="ChEBI" id="CHEBI:29108"/>
    </ligand>
</feature>
<feature type="binding site" evidence="9">
    <location>
        <position position="62"/>
    </location>
    <ligand>
        <name>Ca(2+)</name>
        <dbReference type="ChEBI" id="CHEBI:29108"/>
    </ligand>
</feature>
<feature type="binding site" evidence="9">
    <location>
        <position position="64"/>
    </location>
    <ligand>
        <name>Ca(2+)</name>
        <dbReference type="ChEBI" id="CHEBI:29108"/>
    </ligand>
</feature>
<feature type="binding site" evidence="9">
    <location>
        <position position="66"/>
    </location>
    <ligand>
        <name>Ca(2+)</name>
        <dbReference type="ChEBI" id="CHEBI:29108"/>
    </ligand>
</feature>
<feature type="binding site" evidence="9">
    <location>
        <position position="71"/>
    </location>
    <ligand>
        <name>Ca(2+)</name>
        <dbReference type="ChEBI" id="CHEBI:29108"/>
    </ligand>
</feature>
<accession>Q8K3P6</accession>
<proteinExistence type="evidence at protein level"/>
<evidence type="ECO:0000250" key="1">
    <source>
        <dbReference type="UniProtKB" id="Q6KCM7"/>
    </source>
</evidence>
<evidence type="ECO:0000250" key="2">
    <source>
        <dbReference type="UniProtKB" id="Q6NUK1"/>
    </source>
</evidence>
<evidence type="ECO:0000255" key="3"/>
<evidence type="ECO:0000255" key="4">
    <source>
        <dbReference type="PROSITE-ProRule" id="PRU00282"/>
    </source>
</evidence>
<evidence type="ECO:0000255" key="5">
    <source>
        <dbReference type="PROSITE-ProRule" id="PRU00448"/>
    </source>
</evidence>
<evidence type="ECO:0000269" key="6">
    <source>
    </source>
</evidence>
<evidence type="ECO:0000303" key="7">
    <source>
    </source>
</evidence>
<evidence type="ECO:0000303" key="8">
    <source>
    </source>
</evidence>
<evidence type="ECO:0000305" key="9"/>
<evidence type="ECO:0000305" key="10">
    <source>
    </source>
</evidence>
<evidence type="ECO:0000305" key="11">
    <source>
    </source>
</evidence>
<evidence type="ECO:0000312" key="12">
    <source>
        <dbReference type="RGD" id="628666"/>
    </source>
</evidence>
<name>SCMC2_RAT</name>
<organism>
    <name type="scientific">Rattus norvegicus</name>
    <name type="common">Rat</name>
    <dbReference type="NCBI Taxonomy" id="10116"/>
    <lineage>
        <taxon>Eukaryota</taxon>
        <taxon>Metazoa</taxon>
        <taxon>Chordata</taxon>
        <taxon>Craniata</taxon>
        <taxon>Vertebrata</taxon>
        <taxon>Euteleostomi</taxon>
        <taxon>Mammalia</taxon>
        <taxon>Eutheria</taxon>
        <taxon>Euarchontoglires</taxon>
        <taxon>Glires</taxon>
        <taxon>Rodentia</taxon>
        <taxon>Myomorpha</taxon>
        <taxon>Muroidea</taxon>
        <taxon>Muridae</taxon>
        <taxon>Murinae</taxon>
        <taxon>Rattus</taxon>
    </lineage>
</organism>
<sequence>MLCLCLYVPIAGEAQTEFQYFESKGLPTELKSIFKLSVFIPSQEFSTYRQWKQKIVQAGDKDLDGQLDFEEFVHYLQDHEKKLRLVFKSLDKKNDGRIDAQEIMQSLRDLGVKISEQQAEKILKSMDKNGTMTIDWNEWRDYHLLHPVENIPEIILYWKHSTIFDVGENLTVPDEFTVEERQTGMWWRHLVAGGGAGAVSRTCTAPLDRLKVLMQVHASRSNNMCIIGGFTQMIREGGAKSLWRGNGINVLKIAPESAIKFMAYEQMKRLVGSDQETLRIHERLVAGSLAGAIAQSSIYPMEVLKTRMALRKTGQYSGMLDCAKRILAKEGVAAFYKGYIPNMLGIIPYAGIDLAVYETLKNTWLQRYAVNSADPGVFVLLACGTISSTCGQLASYPLALVRTRMQAQASIEGAPEVTMSSLFKQILRTEGAFGLYRGLAPNFMKVIPAVSISYVVYENLKITLGVQSR</sequence>
<protein>
    <recommendedName>
        <fullName evidence="1">Mitochondrial adenyl nucleotide antiporter SLC25A25</fullName>
    </recommendedName>
    <alternativeName>
        <fullName evidence="7">Mitochondrial calcium-dependent solute carrier</fullName>
    </alternativeName>
    <alternativeName>
        <fullName evidence="8">Short calcium-binding mitochondrial carrier protein 2</fullName>
        <shortName evidence="8">SCaMC-2</shortName>
    </alternativeName>
    <alternativeName>
        <fullName evidence="12">Solute carrier family 25 member 25</fullName>
    </alternativeName>
</protein>
<reference key="1">
    <citation type="journal article" date="2003" name="J. Biol. Chem.">
        <title>A novel mitochondrial Ca2+-dependent solute carrier in the liver identified by mRNA differential display.</title>
        <authorList>
            <person name="Mashima H."/>
            <person name="Ueda N."/>
            <person name="Ohno H."/>
            <person name="Suzuki J."/>
            <person name="Ohnishi H."/>
            <person name="Yasuda H."/>
            <person name="Tsuchida T."/>
            <person name="Kanamaru C."/>
            <person name="Makita N."/>
            <person name="Iiri T."/>
            <person name="Omata M."/>
            <person name="Kojima I."/>
        </authorList>
    </citation>
    <scope>NUCLEOTIDE SEQUENCE [MRNA]</scope>
    <scope>SUBCELLULAR LOCATION</scope>
    <scope>CALCIUM-BINDING</scope>
    <scope>TISSUE SPECIFICITY</scope>
    <scope>DEVELOPMENTAL STAGE</scope>
    <scope>INDUCTION</scope>
    <source>
        <strain>Sprague-Dawley</strain>
    </source>
</reference>
<reference key="2">
    <citation type="journal article" date="2004" name="J. Biol. Chem.">
        <title>Identification of a novel human subfamily of mitochondrial carriers with calcium-binding domains.</title>
        <authorList>
            <person name="del Arco A."/>
            <person name="Satrustegui J."/>
        </authorList>
    </citation>
    <scope>SUBCELLULAR LOCATION</scope>
</reference>
<gene>
    <name evidence="12" type="primary">Slc25a25</name>
    <name evidence="7" type="synonym">Mcsc</name>
    <name type="synonym">Pcscl</name>
    <name type="synonym">Scamc2</name>
</gene>
<dbReference type="EMBL" id="AY043169">
    <property type="protein sequence ID" value="AAL05592.1"/>
    <property type="molecule type" value="mRNA"/>
</dbReference>
<dbReference type="RefSeq" id="NP_663710.1">
    <property type="nucleotide sequence ID" value="NM_145677.2"/>
</dbReference>
<dbReference type="SMR" id="Q8K3P6"/>
<dbReference type="BioGRID" id="251620">
    <property type="interactions" value="1"/>
</dbReference>
<dbReference type="FunCoup" id="Q8K3P6">
    <property type="interactions" value="2019"/>
</dbReference>
<dbReference type="STRING" id="10116.ENSRNOP00000020206"/>
<dbReference type="iPTMnet" id="Q8K3P6"/>
<dbReference type="PhosphoSitePlus" id="Q8K3P6"/>
<dbReference type="jPOST" id="Q8K3P6"/>
<dbReference type="PaxDb" id="10116-ENSRNOP00000020206"/>
<dbReference type="GeneID" id="246771"/>
<dbReference type="KEGG" id="rno:246771"/>
<dbReference type="UCSC" id="RGD:628666">
    <property type="organism name" value="rat"/>
</dbReference>
<dbReference type="AGR" id="RGD:628666"/>
<dbReference type="CTD" id="114789"/>
<dbReference type="RGD" id="628666">
    <property type="gene designation" value="Slc25a25"/>
</dbReference>
<dbReference type="VEuPathDB" id="HostDB:ENSRNOG00000014338"/>
<dbReference type="eggNOG" id="KOG0036">
    <property type="taxonomic scope" value="Eukaryota"/>
</dbReference>
<dbReference type="HOGENOM" id="CLU_015166_2_0_1"/>
<dbReference type="InParanoid" id="Q8K3P6"/>
<dbReference type="PRO" id="PR:Q8K3P6"/>
<dbReference type="Proteomes" id="UP000002494">
    <property type="component" value="Chromosome 3"/>
</dbReference>
<dbReference type="Bgee" id="ENSRNOG00000014338">
    <property type="expression patterns" value="Expressed in liver and 20 other cell types or tissues"/>
</dbReference>
<dbReference type="GO" id="GO:0005743">
    <property type="term" value="C:mitochondrial inner membrane"/>
    <property type="evidence" value="ECO:0007669"/>
    <property type="project" value="UniProtKB-SubCell"/>
</dbReference>
<dbReference type="GO" id="GO:0005739">
    <property type="term" value="C:mitochondrion"/>
    <property type="evidence" value="ECO:0000314"/>
    <property type="project" value="UniProtKB"/>
</dbReference>
<dbReference type="GO" id="GO:0005347">
    <property type="term" value="F:ATP transmembrane transporter activity"/>
    <property type="evidence" value="ECO:0000318"/>
    <property type="project" value="GO_Central"/>
</dbReference>
<dbReference type="GO" id="GO:0140987">
    <property type="term" value="F:ATP:phosphate antiporter activity"/>
    <property type="evidence" value="ECO:0000250"/>
    <property type="project" value="UniProtKB"/>
</dbReference>
<dbReference type="GO" id="GO:0005509">
    <property type="term" value="F:calcium ion binding"/>
    <property type="evidence" value="ECO:0007669"/>
    <property type="project" value="InterPro"/>
</dbReference>
<dbReference type="GO" id="GO:0060612">
    <property type="term" value="P:adipose tissue development"/>
    <property type="evidence" value="ECO:0000266"/>
    <property type="project" value="RGD"/>
</dbReference>
<dbReference type="GO" id="GO:0015866">
    <property type="term" value="P:ADP transport"/>
    <property type="evidence" value="ECO:0000318"/>
    <property type="project" value="GO_Central"/>
</dbReference>
<dbReference type="GO" id="GO:0046034">
    <property type="term" value="P:ATP metabolic process"/>
    <property type="evidence" value="ECO:0000266"/>
    <property type="project" value="RGD"/>
</dbReference>
<dbReference type="GO" id="GO:0015867">
    <property type="term" value="P:ATP transport"/>
    <property type="evidence" value="ECO:0000318"/>
    <property type="project" value="GO_Central"/>
</dbReference>
<dbReference type="GO" id="GO:0070588">
    <property type="term" value="P:calcium ion transmembrane transport"/>
    <property type="evidence" value="ECO:0000266"/>
    <property type="project" value="RGD"/>
</dbReference>
<dbReference type="GO" id="GO:0043010">
    <property type="term" value="P:camera-type eye development"/>
    <property type="evidence" value="ECO:0000266"/>
    <property type="project" value="RGD"/>
</dbReference>
<dbReference type="GO" id="GO:0045333">
    <property type="term" value="P:cellular respiration"/>
    <property type="evidence" value="ECO:0000266"/>
    <property type="project" value="RGD"/>
</dbReference>
<dbReference type="GO" id="GO:0035264">
    <property type="term" value="P:multicellular organism growth"/>
    <property type="evidence" value="ECO:0000266"/>
    <property type="project" value="RGD"/>
</dbReference>
<dbReference type="GO" id="GO:0014823">
    <property type="term" value="P:response to activity"/>
    <property type="evidence" value="ECO:0000266"/>
    <property type="project" value="RGD"/>
</dbReference>
<dbReference type="GO" id="GO:0002021">
    <property type="term" value="P:response to dietary excess"/>
    <property type="evidence" value="ECO:0000266"/>
    <property type="project" value="RGD"/>
</dbReference>
<dbReference type="GO" id="GO:0032094">
    <property type="term" value="P:response to food"/>
    <property type="evidence" value="ECO:0000266"/>
    <property type="project" value="RGD"/>
</dbReference>
<dbReference type="FunFam" id="1.10.238.10:FF:000098">
    <property type="entry name" value="calcium-binding mitochondrial carrier protein SCaMC-2 isoform X1"/>
    <property type="match status" value="1"/>
</dbReference>
<dbReference type="FunFam" id="1.10.238.10:FF:000028">
    <property type="entry name" value="Putative calcium-binding mitochondrial carrier protein scamc-2"/>
    <property type="match status" value="1"/>
</dbReference>
<dbReference type="FunFam" id="1.50.40.10:FF:000003">
    <property type="entry name" value="Putative calcium-binding mitochondrial carrier protein scamc-2"/>
    <property type="match status" value="1"/>
</dbReference>
<dbReference type="Gene3D" id="1.10.238.10">
    <property type="entry name" value="EF-hand"/>
    <property type="match status" value="2"/>
</dbReference>
<dbReference type="Gene3D" id="1.50.40.10">
    <property type="entry name" value="Mitochondrial carrier domain"/>
    <property type="match status" value="1"/>
</dbReference>
<dbReference type="InterPro" id="IPR011992">
    <property type="entry name" value="EF-hand-dom_pair"/>
</dbReference>
<dbReference type="InterPro" id="IPR002048">
    <property type="entry name" value="EF_hand_dom"/>
</dbReference>
<dbReference type="InterPro" id="IPR002167">
    <property type="entry name" value="GDC-like"/>
</dbReference>
<dbReference type="InterPro" id="IPR002067">
    <property type="entry name" value="Mit_carrier"/>
</dbReference>
<dbReference type="InterPro" id="IPR018108">
    <property type="entry name" value="Mitochondrial_sb/sol_carrier"/>
</dbReference>
<dbReference type="InterPro" id="IPR023395">
    <property type="entry name" value="Mt_carrier_dom_sf"/>
</dbReference>
<dbReference type="PANTHER" id="PTHR24089">
    <property type="entry name" value="SOLUTE CARRIER FAMILY 25"/>
    <property type="match status" value="1"/>
</dbReference>
<dbReference type="Pfam" id="PF13499">
    <property type="entry name" value="EF-hand_7"/>
    <property type="match status" value="1"/>
</dbReference>
<dbReference type="Pfam" id="PF13833">
    <property type="entry name" value="EF-hand_8"/>
    <property type="match status" value="1"/>
</dbReference>
<dbReference type="Pfam" id="PF00153">
    <property type="entry name" value="Mito_carr"/>
    <property type="match status" value="3"/>
</dbReference>
<dbReference type="PRINTS" id="PR00928">
    <property type="entry name" value="GRAVESDC"/>
</dbReference>
<dbReference type="PRINTS" id="PR00926">
    <property type="entry name" value="MITOCARRIER"/>
</dbReference>
<dbReference type="SMART" id="SM00054">
    <property type="entry name" value="EFh"/>
    <property type="match status" value="3"/>
</dbReference>
<dbReference type="SUPFAM" id="SSF47473">
    <property type="entry name" value="EF-hand"/>
    <property type="match status" value="1"/>
</dbReference>
<dbReference type="SUPFAM" id="SSF103506">
    <property type="entry name" value="Mitochondrial carrier"/>
    <property type="match status" value="1"/>
</dbReference>
<dbReference type="PROSITE" id="PS50222">
    <property type="entry name" value="EF_HAND_2"/>
    <property type="match status" value="3"/>
</dbReference>
<dbReference type="PROSITE" id="PS50920">
    <property type="entry name" value="SOLCAR"/>
    <property type="match status" value="3"/>
</dbReference>
<comment type="function">
    <text evidence="1">Electroneutral antiporter that most probably mediates the transport of adenyl nucleotides through the inner mitochondrial membrane. Originally identified as an ATP-magnesium/inorganic phosphate antiporter, it could have a broader specificity for adenyl nucleotides. By regulating the mitochondrial matrix adenyl nucleotide pool could adapt to changing cellular energetic demands and indirectly regulate adenyl nucleotide-dependent metabolic pathways.</text>
</comment>
<comment type="catalytic activity">
    <reaction evidence="1">
        <text>Mg(2+)(out) + phosphate(in) + ATP(out) = Mg(2+)(in) + phosphate(out) + ATP(in)</text>
        <dbReference type="Rhea" id="RHEA:65840"/>
        <dbReference type="ChEBI" id="CHEBI:18420"/>
        <dbReference type="ChEBI" id="CHEBI:30616"/>
        <dbReference type="ChEBI" id="CHEBI:43474"/>
    </reaction>
</comment>
<comment type="activity regulation">
    <text evidence="2">Activated by an increase in cytosolic calcium levels that induce a conformational change of the N-terminal regulatory domain, uncapping the channel and allowing transport.</text>
</comment>
<comment type="subcellular location">
    <subcellularLocation>
        <location evidence="10 11">Mitochondrion inner membrane</location>
        <topology evidence="3">Multi-pass membrane protein</topology>
    </subcellularLocation>
</comment>
<comment type="tissue specificity">
    <text evidence="6">Mainly present in the liver and the skeletal muscle (at protein level).</text>
</comment>
<comment type="developmental stage">
    <text evidence="6">In the liver, expression is higher in the adult stage than in the fetal stage.</text>
</comment>
<comment type="induction">
    <text evidence="6">Up-regulated in dexamethasone-treated cells before the expression of albumin.</text>
</comment>
<comment type="domain">
    <text evidence="2">The regulatory N-terminal domain/NTD, binds calcium in the mitochondrial intermembrane space and regulates the antiporter activity of the transmembrane domain/TMD. In absence of calcium, the apo form of the N-terminal domain is intrinsically disordered and binds to the transmembrane domain, inhibiting the transporter activity. Binding of calcium leads to a major conformational change and abolishes the interaction with the transmembrane domain and the inhibition of the transporter activity.</text>
</comment>
<comment type="domain">
    <text evidence="2">The C-terminal mitochondrial carrier domain/transmembrane domain/TMD bears the transmembrane transporter activity.</text>
</comment>
<comment type="domain">
    <text evidence="2">Linker region/H9 could directly block the transport of substrates across the transporter.</text>
</comment>
<comment type="similarity">
    <text evidence="9">Belongs to the mitochondrial carrier (TC 2.A.29) family.</text>
</comment>
<keyword id="KW-0050">Antiport</keyword>
<keyword id="KW-0106">Calcium</keyword>
<keyword id="KW-0472">Membrane</keyword>
<keyword id="KW-0479">Metal-binding</keyword>
<keyword id="KW-0496">Mitochondrion</keyword>
<keyword id="KW-0999">Mitochondrion inner membrane</keyword>
<keyword id="KW-1185">Reference proteome</keyword>
<keyword id="KW-0677">Repeat</keyword>
<keyword id="KW-0812">Transmembrane</keyword>
<keyword id="KW-1133">Transmembrane helix</keyword>
<keyword id="KW-0813">Transport</keyword>